<dbReference type="EMBL" id="L19518">
    <property type="protein sequence ID" value="AAA32082.1"/>
    <property type="molecule type" value="Genomic_DNA"/>
</dbReference>
<dbReference type="SMR" id="Q35942"/>
<dbReference type="GO" id="GO:0005743">
    <property type="term" value="C:mitochondrial inner membrane"/>
    <property type="evidence" value="ECO:0007669"/>
    <property type="project" value="UniProtKB-SubCell"/>
</dbReference>
<dbReference type="GO" id="GO:0046872">
    <property type="term" value="F:metal ion binding"/>
    <property type="evidence" value="ECO:0007669"/>
    <property type="project" value="UniProtKB-KW"/>
</dbReference>
<dbReference type="GO" id="GO:0008121">
    <property type="term" value="F:ubiquinol-cytochrome-c reductase activity"/>
    <property type="evidence" value="ECO:0007669"/>
    <property type="project" value="TreeGrafter"/>
</dbReference>
<dbReference type="GO" id="GO:0006122">
    <property type="term" value="P:mitochondrial electron transport, ubiquinol to cytochrome c"/>
    <property type="evidence" value="ECO:0007669"/>
    <property type="project" value="TreeGrafter"/>
</dbReference>
<dbReference type="CDD" id="cd00284">
    <property type="entry name" value="Cytochrome_b_N"/>
    <property type="match status" value="1"/>
</dbReference>
<dbReference type="Gene3D" id="1.20.810.10">
    <property type="entry name" value="Cytochrome Bc1 Complex, Chain C"/>
    <property type="match status" value="1"/>
</dbReference>
<dbReference type="InterPro" id="IPR005797">
    <property type="entry name" value="Cyt_b/b6_N"/>
</dbReference>
<dbReference type="InterPro" id="IPR027387">
    <property type="entry name" value="Cytb/b6-like_sf"/>
</dbReference>
<dbReference type="InterPro" id="IPR048259">
    <property type="entry name" value="Cytochrome_b_N_euk/bac"/>
</dbReference>
<dbReference type="InterPro" id="IPR016174">
    <property type="entry name" value="Di-haem_cyt_TM"/>
</dbReference>
<dbReference type="PANTHER" id="PTHR19271">
    <property type="entry name" value="CYTOCHROME B"/>
    <property type="match status" value="1"/>
</dbReference>
<dbReference type="PANTHER" id="PTHR19271:SF16">
    <property type="entry name" value="CYTOCHROME B"/>
    <property type="match status" value="1"/>
</dbReference>
<dbReference type="Pfam" id="PF00033">
    <property type="entry name" value="Cytochrome_B"/>
    <property type="match status" value="1"/>
</dbReference>
<dbReference type="SUPFAM" id="SSF81342">
    <property type="entry name" value="Transmembrane di-heme cytochromes"/>
    <property type="match status" value="1"/>
</dbReference>
<dbReference type="PROSITE" id="PS51002">
    <property type="entry name" value="CYTB_NTER"/>
    <property type="match status" value="1"/>
</dbReference>
<keyword id="KW-0249">Electron transport</keyword>
<keyword id="KW-0349">Heme</keyword>
<keyword id="KW-0408">Iron</keyword>
<keyword id="KW-0472">Membrane</keyword>
<keyword id="KW-0479">Metal-binding</keyword>
<keyword id="KW-0496">Mitochondrion</keyword>
<keyword id="KW-0999">Mitochondrion inner membrane</keyword>
<keyword id="KW-0679">Respiratory chain</keyword>
<keyword id="KW-0812">Transmembrane</keyword>
<keyword id="KW-1133">Transmembrane helix</keyword>
<keyword id="KW-0813">Transport</keyword>
<keyword id="KW-0830">Ubiquinone</keyword>
<evidence type="ECO:0000250" key="1"/>
<evidence type="ECO:0000250" key="2">
    <source>
        <dbReference type="UniProtKB" id="P00157"/>
    </source>
</evidence>
<evidence type="ECO:0000255" key="3">
    <source>
        <dbReference type="PROSITE-ProRule" id="PRU00968"/>
    </source>
</evidence>
<proteinExistence type="inferred from homology"/>
<accession>Q35942</accession>
<name>CYB_STUTI</name>
<gene>
    <name type="primary">MT-CYB</name>
    <name type="synonym">COB</name>
    <name type="synonym">CYTB</name>
    <name type="synonym">MTCYB</name>
</gene>
<feature type="chain" id="PRO_0000061621" description="Cytochrome b">
    <location>
        <begin position="1"/>
        <end position="134" status="greater than"/>
    </location>
</feature>
<feature type="transmembrane region" description="Helical" evidence="3">
    <location>
        <begin position="33"/>
        <end position="53"/>
    </location>
</feature>
<feature type="transmembrane region" description="Helical" evidence="2">
    <location>
        <begin position="77"/>
        <end position="98"/>
    </location>
</feature>
<feature type="transmembrane region" description="Helical" evidence="3">
    <location>
        <begin position="113"/>
        <end position="133"/>
    </location>
</feature>
<feature type="binding site" description="axial binding residue" evidence="2">
    <location>
        <position position="83"/>
    </location>
    <ligand>
        <name>heme b</name>
        <dbReference type="ChEBI" id="CHEBI:60344"/>
        <label>b562</label>
    </ligand>
    <ligandPart>
        <name>Fe</name>
        <dbReference type="ChEBI" id="CHEBI:18248"/>
    </ligandPart>
</feature>
<feature type="binding site" description="axial binding residue" evidence="2">
    <location>
        <position position="97"/>
    </location>
    <ligand>
        <name>heme b</name>
        <dbReference type="ChEBI" id="CHEBI:60344"/>
        <label>b566</label>
    </ligand>
    <ligandPart>
        <name>Fe</name>
        <dbReference type="ChEBI" id="CHEBI:18248"/>
    </ligandPart>
</feature>
<feature type="non-terminal residue">
    <location>
        <position position="134"/>
    </location>
</feature>
<organism>
    <name type="scientific">Sturnira tildae</name>
    <name type="common">Tilda's yellow-shouldered bat</name>
    <dbReference type="NCBI Taxonomy" id="27661"/>
    <lineage>
        <taxon>Eukaryota</taxon>
        <taxon>Metazoa</taxon>
        <taxon>Chordata</taxon>
        <taxon>Craniata</taxon>
        <taxon>Vertebrata</taxon>
        <taxon>Euteleostomi</taxon>
        <taxon>Mammalia</taxon>
        <taxon>Eutheria</taxon>
        <taxon>Laurasiatheria</taxon>
        <taxon>Chiroptera</taxon>
        <taxon>Yangochiroptera</taxon>
        <taxon>Phyllostomidae</taxon>
        <taxon>Stenodermatinae</taxon>
        <taxon>Sturnira</taxon>
    </lineage>
</organism>
<geneLocation type="mitochondrion"/>
<sequence length="134" mass="15067">MTNIRKTHPLLKIINNSLVDLPAPSSLTSWWNFGSLLGVCLGVQILTGLFLAMHYTSDTATAFNSVTHICRDVNYGWLLRYLHANGASMFFICLYLHVGRGLYYGSYTYSETWNIGILLLFAVMATDFMGYVLP</sequence>
<protein>
    <recommendedName>
        <fullName>Cytochrome b</fullName>
    </recommendedName>
    <alternativeName>
        <fullName>Complex III subunit 3</fullName>
    </alternativeName>
    <alternativeName>
        <fullName>Complex III subunit III</fullName>
    </alternativeName>
    <alternativeName>
        <fullName>Cytochrome b-c1 complex subunit 3</fullName>
    </alternativeName>
    <alternativeName>
        <fullName>Ubiquinol-cytochrome-c reductase complex cytochrome b subunit</fullName>
    </alternativeName>
</protein>
<comment type="function">
    <text evidence="2">Component of the ubiquinol-cytochrome c reductase complex (complex III or cytochrome b-c1 complex) that is part of the mitochondrial respiratory chain. The b-c1 complex mediates electron transfer from ubiquinol to cytochrome c. Contributes to the generation of a proton gradient across the mitochondrial membrane that is then used for ATP synthesis.</text>
</comment>
<comment type="cofactor">
    <cofactor evidence="2">
        <name>heme b</name>
        <dbReference type="ChEBI" id="CHEBI:60344"/>
    </cofactor>
    <text evidence="2">Binds 2 heme b groups non-covalently.</text>
</comment>
<comment type="subunit">
    <text evidence="2">The cytochrome bc1 complex contains 11 subunits: 3 respiratory subunits (MT-CYB, CYC1 and UQCRFS1), 2 core proteins (UQCRC1 and UQCRC2) and 6 low-molecular weight proteins (UQCRH/QCR6, UQCRB/QCR7, UQCRQ/QCR8, UQCR10/QCR9, UQCR11/QCR10 and a cleavage product of UQCRFS1). This cytochrome bc1 complex then forms a dimer.</text>
</comment>
<comment type="subcellular location">
    <subcellularLocation>
        <location evidence="2">Mitochondrion inner membrane</location>
        <topology evidence="2">Multi-pass membrane protein</topology>
    </subcellularLocation>
</comment>
<comment type="miscellaneous">
    <text evidence="1">Heme 1 (or BL or b562) is low-potential and absorbs at about 562 nm, and heme 2 (or BH or b566) is high-potential and absorbs at about 566 nm.</text>
</comment>
<comment type="similarity">
    <text evidence="3">Belongs to the cytochrome b family.</text>
</comment>
<comment type="caution">
    <text evidence="2">The full-length protein contains only eight transmembrane helices, not nine as predicted by bioinformatics tools.</text>
</comment>
<reference key="1">
    <citation type="journal article" date="1993" name="Mol. Biol. Evol.">
        <title>Molecular phylogenetics of Stenodermatini bat genera: congruence of data from nuclear and mitochondrial DNA.</title>
        <authorList>
            <person name="den Bussche R.A."/>
            <person name="Baker R.J."/>
            <person name="Wichman H.A."/>
            <person name="Hamilton M.J."/>
        </authorList>
    </citation>
    <scope>NUCLEOTIDE SEQUENCE [GENOMIC DNA]</scope>
    <source>
        <strain>Isolate TK 17684</strain>
        <tissue>Muscle</tissue>
    </source>
</reference>